<proteinExistence type="inferred from homology"/>
<gene>
    <name evidence="1" type="primary">truD</name>
    <name type="ordered locus">Maqu_0925</name>
</gene>
<protein>
    <recommendedName>
        <fullName evidence="1">tRNA pseudouridine synthase D</fullName>
        <ecNumber evidence="1">5.4.99.27</ecNumber>
    </recommendedName>
    <alternativeName>
        <fullName evidence="1">tRNA pseudouridine(13) synthase</fullName>
    </alternativeName>
    <alternativeName>
        <fullName evidence="1">tRNA pseudouridylate synthase D</fullName>
    </alternativeName>
    <alternativeName>
        <fullName evidence="1">tRNA-uridine isomerase D</fullName>
    </alternativeName>
</protein>
<organism>
    <name type="scientific">Marinobacter nauticus (strain ATCC 700491 / DSM 11845 / VT8)</name>
    <name type="common">Marinobacter aquaeolei</name>
    <dbReference type="NCBI Taxonomy" id="351348"/>
    <lineage>
        <taxon>Bacteria</taxon>
        <taxon>Pseudomonadati</taxon>
        <taxon>Pseudomonadota</taxon>
        <taxon>Gammaproteobacteria</taxon>
        <taxon>Pseudomonadales</taxon>
        <taxon>Marinobacteraceae</taxon>
        <taxon>Marinobacter</taxon>
    </lineage>
</organism>
<accession>A1TZ52</accession>
<name>TRUD_MARN8</name>
<sequence>MSEDSQWLLDWPVSGGARAGRAELKTSPEDFRVTESLWPTREDDAAASGPVEVSGDGEHLCLRLEKTGDNTEYVARELAALAGCRSFDVGFCGLKDRHAVTVQWFSLYRPGQEADDQALMAEVGQRWPVRAAVRHSRKLRRGDHQANGFEIVLRNVTGQRELVEAGLERLASQGAPNYFGPQRFGFQGGNLDRAVQIDPSRLNRKRGRAGRSASKNVLYFSAARSWLFNQVLAERVSNRTWTEVLPGEPEPSGAGPTGPLWGDGGTLASGEQETLERGVVDACPGLARLFQSTRMKPERRPLVAHPGEFKWQWLDTTTLRVQFVLSPGQYATTVLGDLFELEDLSLSRDNK</sequence>
<feature type="chain" id="PRO_1000149846" description="tRNA pseudouridine synthase D">
    <location>
        <begin position="1"/>
        <end position="351"/>
    </location>
</feature>
<feature type="domain" description="TRUD" evidence="1">
    <location>
        <begin position="174"/>
        <end position="304"/>
    </location>
</feature>
<feature type="region of interest" description="Disordered" evidence="2">
    <location>
        <begin position="244"/>
        <end position="268"/>
    </location>
</feature>
<feature type="active site" description="Nucleophile" evidence="1">
    <location>
        <position position="96"/>
    </location>
</feature>
<dbReference type="EC" id="5.4.99.27" evidence="1"/>
<dbReference type="EMBL" id="CP000514">
    <property type="protein sequence ID" value="ABM18021.1"/>
    <property type="molecule type" value="Genomic_DNA"/>
</dbReference>
<dbReference type="RefSeq" id="WP_011784441.1">
    <property type="nucleotide sequence ID" value="NC_008740.1"/>
</dbReference>
<dbReference type="SMR" id="A1TZ52"/>
<dbReference type="STRING" id="351348.Maqu_0925"/>
<dbReference type="KEGG" id="maq:Maqu_0925"/>
<dbReference type="eggNOG" id="COG0585">
    <property type="taxonomic scope" value="Bacteria"/>
</dbReference>
<dbReference type="HOGENOM" id="CLU_005281_4_0_6"/>
<dbReference type="OrthoDB" id="1550679at2"/>
<dbReference type="Proteomes" id="UP000000998">
    <property type="component" value="Chromosome"/>
</dbReference>
<dbReference type="GO" id="GO:0005829">
    <property type="term" value="C:cytosol"/>
    <property type="evidence" value="ECO:0007669"/>
    <property type="project" value="TreeGrafter"/>
</dbReference>
<dbReference type="GO" id="GO:0003723">
    <property type="term" value="F:RNA binding"/>
    <property type="evidence" value="ECO:0007669"/>
    <property type="project" value="InterPro"/>
</dbReference>
<dbReference type="GO" id="GO:0160150">
    <property type="term" value="F:tRNA pseudouridine(13) synthase activity"/>
    <property type="evidence" value="ECO:0007669"/>
    <property type="project" value="UniProtKB-EC"/>
</dbReference>
<dbReference type="GO" id="GO:0031119">
    <property type="term" value="P:tRNA pseudouridine synthesis"/>
    <property type="evidence" value="ECO:0007669"/>
    <property type="project" value="UniProtKB-UniRule"/>
</dbReference>
<dbReference type="Gene3D" id="3.30.2350.20">
    <property type="entry name" value="TruD, catalytic domain"/>
    <property type="match status" value="2"/>
</dbReference>
<dbReference type="HAMAP" id="MF_01082">
    <property type="entry name" value="TruD"/>
    <property type="match status" value="1"/>
</dbReference>
<dbReference type="InterPro" id="IPR020103">
    <property type="entry name" value="PsdUridine_synth_cat_dom_sf"/>
</dbReference>
<dbReference type="InterPro" id="IPR001656">
    <property type="entry name" value="PsdUridine_synth_TruD"/>
</dbReference>
<dbReference type="InterPro" id="IPR020119">
    <property type="entry name" value="PsdUridine_synth_TruD_CS"/>
</dbReference>
<dbReference type="InterPro" id="IPR011760">
    <property type="entry name" value="PsdUridine_synth_TruD_insert"/>
</dbReference>
<dbReference type="InterPro" id="IPR042214">
    <property type="entry name" value="TruD_catalytic"/>
</dbReference>
<dbReference type="InterPro" id="IPR050170">
    <property type="entry name" value="TruD_pseudoU_synthase"/>
</dbReference>
<dbReference type="PANTHER" id="PTHR47811">
    <property type="entry name" value="TRNA PSEUDOURIDINE SYNTHASE D"/>
    <property type="match status" value="1"/>
</dbReference>
<dbReference type="PANTHER" id="PTHR47811:SF1">
    <property type="entry name" value="TRNA PSEUDOURIDINE SYNTHASE D"/>
    <property type="match status" value="1"/>
</dbReference>
<dbReference type="Pfam" id="PF01142">
    <property type="entry name" value="TruD"/>
    <property type="match status" value="1"/>
</dbReference>
<dbReference type="SUPFAM" id="SSF55120">
    <property type="entry name" value="Pseudouridine synthase"/>
    <property type="match status" value="1"/>
</dbReference>
<dbReference type="PROSITE" id="PS50984">
    <property type="entry name" value="TRUD"/>
    <property type="match status" value="1"/>
</dbReference>
<dbReference type="PROSITE" id="PS01268">
    <property type="entry name" value="UPF0024"/>
    <property type="match status" value="1"/>
</dbReference>
<evidence type="ECO:0000255" key="1">
    <source>
        <dbReference type="HAMAP-Rule" id="MF_01082"/>
    </source>
</evidence>
<evidence type="ECO:0000256" key="2">
    <source>
        <dbReference type="SAM" id="MobiDB-lite"/>
    </source>
</evidence>
<reference key="1">
    <citation type="journal article" date="2011" name="Appl. Environ. Microbiol.">
        <title>Genomic potential of Marinobacter aquaeolei, a biogeochemical 'opportunitroph'.</title>
        <authorList>
            <person name="Singer E."/>
            <person name="Webb E.A."/>
            <person name="Nelson W.C."/>
            <person name="Heidelberg J.F."/>
            <person name="Ivanova N."/>
            <person name="Pati A."/>
            <person name="Edwards K.J."/>
        </authorList>
    </citation>
    <scope>NUCLEOTIDE SEQUENCE [LARGE SCALE GENOMIC DNA]</scope>
    <source>
        <strain>ATCC 700491 / DSM 11845 / VT8</strain>
    </source>
</reference>
<comment type="function">
    <text evidence="1">Responsible for synthesis of pseudouridine from uracil-13 in transfer RNAs.</text>
</comment>
<comment type="catalytic activity">
    <reaction evidence="1">
        <text>uridine(13) in tRNA = pseudouridine(13) in tRNA</text>
        <dbReference type="Rhea" id="RHEA:42540"/>
        <dbReference type="Rhea" id="RHEA-COMP:10105"/>
        <dbReference type="Rhea" id="RHEA-COMP:10106"/>
        <dbReference type="ChEBI" id="CHEBI:65314"/>
        <dbReference type="ChEBI" id="CHEBI:65315"/>
        <dbReference type="EC" id="5.4.99.27"/>
    </reaction>
</comment>
<comment type="similarity">
    <text evidence="1">Belongs to the pseudouridine synthase TruD family.</text>
</comment>
<keyword id="KW-0413">Isomerase</keyword>
<keyword id="KW-0819">tRNA processing</keyword>